<protein>
    <recommendedName>
        <fullName evidence="1">Probable endonuclease 4</fullName>
        <ecNumber evidence="1">3.1.21.2</ecNumber>
    </recommendedName>
    <alternativeName>
        <fullName evidence="1">Endodeoxyribonuclease IV</fullName>
    </alternativeName>
    <alternativeName>
        <fullName evidence="1">Endonuclease IV</fullName>
    </alternativeName>
</protein>
<keyword id="KW-0227">DNA damage</keyword>
<keyword id="KW-0234">DNA repair</keyword>
<keyword id="KW-0255">Endonuclease</keyword>
<keyword id="KW-0378">Hydrolase</keyword>
<keyword id="KW-0479">Metal-binding</keyword>
<keyword id="KW-0540">Nuclease</keyword>
<keyword id="KW-0862">Zinc</keyword>
<organism>
    <name type="scientific">Escherichia coli (strain SMS-3-5 / SECEC)</name>
    <dbReference type="NCBI Taxonomy" id="439855"/>
    <lineage>
        <taxon>Bacteria</taxon>
        <taxon>Pseudomonadati</taxon>
        <taxon>Pseudomonadota</taxon>
        <taxon>Gammaproteobacteria</taxon>
        <taxon>Enterobacterales</taxon>
        <taxon>Enterobacteriaceae</taxon>
        <taxon>Escherichia</taxon>
    </lineage>
</organism>
<evidence type="ECO:0000255" key="1">
    <source>
        <dbReference type="HAMAP-Rule" id="MF_00152"/>
    </source>
</evidence>
<comment type="function">
    <text evidence="1">Endonuclease IV plays a role in DNA repair. It cleaves phosphodiester bonds at apurinic or apyrimidinic (AP) sites, generating a 3'-hydroxyl group and a 5'-terminal sugar phosphate.</text>
</comment>
<comment type="catalytic activity">
    <reaction evidence="1">
        <text>Endonucleolytic cleavage to 5'-phosphooligonucleotide end-products.</text>
        <dbReference type="EC" id="3.1.21.2"/>
    </reaction>
</comment>
<comment type="cofactor">
    <cofactor evidence="1">
        <name>Zn(2+)</name>
        <dbReference type="ChEBI" id="CHEBI:29105"/>
    </cofactor>
    <text evidence="1">Binds 3 Zn(2+) ions.</text>
</comment>
<comment type="similarity">
    <text evidence="1">Belongs to the AP endonuclease 2 family.</text>
</comment>
<gene>
    <name evidence="1" type="primary">nfo</name>
    <name type="ordered locus">EcSMS35_2306</name>
</gene>
<dbReference type="EC" id="3.1.21.2" evidence="1"/>
<dbReference type="EMBL" id="CP000970">
    <property type="protein sequence ID" value="ACB17630.1"/>
    <property type="molecule type" value="Genomic_DNA"/>
</dbReference>
<dbReference type="RefSeq" id="WP_000873886.1">
    <property type="nucleotide sequence ID" value="NC_010498.1"/>
</dbReference>
<dbReference type="SMR" id="B1LKQ6"/>
<dbReference type="KEGG" id="ecm:EcSMS35_2306"/>
<dbReference type="HOGENOM" id="CLU_025885_0_4_6"/>
<dbReference type="Proteomes" id="UP000007011">
    <property type="component" value="Chromosome"/>
</dbReference>
<dbReference type="GO" id="GO:0008833">
    <property type="term" value="F:deoxyribonuclease IV (phage-T4-induced) activity"/>
    <property type="evidence" value="ECO:0007669"/>
    <property type="project" value="UniProtKB-UniRule"/>
</dbReference>
<dbReference type="GO" id="GO:0003677">
    <property type="term" value="F:DNA binding"/>
    <property type="evidence" value="ECO:0007669"/>
    <property type="project" value="InterPro"/>
</dbReference>
<dbReference type="GO" id="GO:0003906">
    <property type="term" value="F:DNA-(apurinic or apyrimidinic site) endonuclease activity"/>
    <property type="evidence" value="ECO:0007669"/>
    <property type="project" value="TreeGrafter"/>
</dbReference>
<dbReference type="GO" id="GO:0008081">
    <property type="term" value="F:phosphoric diester hydrolase activity"/>
    <property type="evidence" value="ECO:0007669"/>
    <property type="project" value="TreeGrafter"/>
</dbReference>
<dbReference type="GO" id="GO:0008270">
    <property type="term" value="F:zinc ion binding"/>
    <property type="evidence" value="ECO:0007669"/>
    <property type="project" value="UniProtKB-UniRule"/>
</dbReference>
<dbReference type="GO" id="GO:0006284">
    <property type="term" value="P:base-excision repair"/>
    <property type="evidence" value="ECO:0007669"/>
    <property type="project" value="TreeGrafter"/>
</dbReference>
<dbReference type="CDD" id="cd00019">
    <property type="entry name" value="AP2Ec"/>
    <property type="match status" value="1"/>
</dbReference>
<dbReference type="FunFam" id="3.20.20.150:FF:000001">
    <property type="entry name" value="Probable endonuclease 4"/>
    <property type="match status" value="1"/>
</dbReference>
<dbReference type="Gene3D" id="3.20.20.150">
    <property type="entry name" value="Divalent-metal-dependent TIM barrel enzymes"/>
    <property type="match status" value="1"/>
</dbReference>
<dbReference type="HAMAP" id="MF_00152">
    <property type="entry name" value="Nfo"/>
    <property type="match status" value="1"/>
</dbReference>
<dbReference type="InterPro" id="IPR001719">
    <property type="entry name" value="AP_endonuc_2"/>
</dbReference>
<dbReference type="InterPro" id="IPR018246">
    <property type="entry name" value="AP_endonuc_F2_Zn_BS"/>
</dbReference>
<dbReference type="InterPro" id="IPR036237">
    <property type="entry name" value="Xyl_isomerase-like_sf"/>
</dbReference>
<dbReference type="InterPro" id="IPR013022">
    <property type="entry name" value="Xyl_isomerase-like_TIM-brl"/>
</dbReference>
<dbReference type="NCBIfam" id="TIGR00587">
    <property type="entry name" value="nfo"/>
    <property type="match status" value="1"/>
</dbReference>
<dbReference type="NCBIfam" id="NF002199">
    <property type="entry name" value="PRK01060.1-4"/>
    <property type="match status" value="1"/>
</dbReference>
<dbReference type="PANTHER" id="PTHR21445:SF0">
    <property type="entry name" value="APURINIC-APYRIMIDINIC ENDONUCLEASE"/>
    <property type="match status" value="1"/>
</dbReference>
<dbReference type="PANTHER" id="PTHR21445">
    <property type="entry name" value="ENDONUCLEASE IV ENDODEOXYRIBONUCLEASE IV"/>
    <property type="match status" value="1"/>
</dbReference>
<dbReference type="Pfam" id="PF01261">
    <property type="entry name" value="AP_endonuc_2"/>
    <property type="match status" value="1"/>
</dbReference>
<dbReference type="SMART" id="SM00518">
    <property type="entry name" value="AP2Ec"/>
    <property type="match status" value="1"/>
</dbReference>
<dbReference type="SUPFAM" id="SSF51658">
    <property type="entry name" value="Xylose isomerase-like"/>
    <property type="match status" value="1"/>
</dbReference>
<dbReference type="PROSITE" id="PS00729">
    <property type="entry name" value="AP_NUCLEASE_F2_1"/>
    <property type="match status" value="1"/>
</dbReference>
<dbReference type="PROSITE" id="PS00730">
    <property type="entry name" value="AP_NUCLEASE_F2_2"/>
    <property type="match status" value="1"/>
</dbReference>
<dbReference type="PROSITE" id="PS00731">
    <property type="entry name" value="AP_NUCLEASE_F2_3"/>
    <property type="match status" value="1"/>
</dbReference>
<dbReference type="PROSITE" id="PS51432">
    <property type="entry name" value="AP_NUCLEASE_F2_4"/>
    <property type="match status" value="1"/>
</dbReference>
<feature type="chain" id="PRO_1000118097" description="Probable endonuclease 4">
    <location>
        <begin position="1"/>
        <end position="285"/>
    </location>
</feature>
<feature type="binding site" evidence="1">
    <location>
        <position position="69"/>
    </location>
    <ligand>
        <name>Zn(2+)</name>
        <dbReference type="ChEBI" id="CHEBI:29105"/>
        <label>1</label>
    </ligand>
</feature>
<feature type="binding site" evidence="1">
    <location>
        <position position="109"/>
    </location>
    <ligand>
        <name>Zn(2+)</name>
        <dbReference type="ChEBI" id="CHEBI:29105"/>
        <label>1</label>
    </ligand>
</feature>
<feature type="binding site" evidence="1">
    <location>
        <position position="145"/>
    </location>
    <ligand>
        <name>Zn(2+)</name>
        <dbReference type="ChEBI" id="CHEBI:29105"/>
        <label>1</label>
    </ligand>
</feature>
<feature type="binding site" evidence="1">
    <location>
        <position position="145"/>
    </location>
    <ligand>
        <name>Zn(2+)</name>
        <dbReference type="ChEBI" id="CHEBI:29105"/>
        <label>2</label>
    </ligand>
</feature>
<feature type="binding site" evidence="1">
    <location>
        <position position="179"/>
    </location>
    <ligand>
        <name>Zn(2+)</name>
        <dbReference type="ChEBI" id="CHEBI:29105"/>
        <label>2</label>
    </ligand>
</feature>
<feature type="binding site" evidence="1">
    <location>
        <position position="182"/>
    </location>
    <ligand>
        <name>Zn(2+)</name>
        <dbReference type="ChEBI" id="CHEBI:29105"/>
        <label>3</label>
    </ligand>
</feature>
<feature type="binding site" evidence="1">
    <location>
        <position position="216"/>
    </location>
    <ligand>
        <name>Zn(2+)</name>
        <dbReference type="ChEBI" id="CHEBI:29105"/>
        <label>2</label>
    </ligand>
</feature>
<feature type="binding site" evidence="1">
    <location>
        <position position="229"/>
    </location>
    <ligand>
        <name>Zn(2+)</name>
        <dbReference type="ChEBI" id="CHEBI:29105"/>
        <label>3</label>
    </ligand>
</feature>
<feature type="binding site" evidence="1">
    <location>
        <position position="231"/>
    </location>
    <ligand>
        <name>Zn(2+)</name>
        <dbReference type="ChEBI" id="CHEBI:29105"/>
        <label>3</label>
    </ligand>
</feature>
<feature type="binding site" evidence="1">
    <location>
        <position position="261"/>
    </location>
    <ligand>
        <name>Zn(2+)</name>
        <dbReference type="ChEBI" id="CHEBI:29105"/>
        <label>2</label>
    </ligand>
</feature>
<name>END4_ECOSM</name>
<sequence>MKYIGAHVSAAGGLANAAIRAAEIDATAFALFTKNQRQWRAAPLTTQTIDEFKAACEKYHYTSAQILPHDSYLINLGHPVTEALEKSRDAFIDEMQRCEQLGLSLLNFHPGSHLMQISEEDCLARIAESINIALDKTHGVTAVIENTAGQGSNLGFKFEHLAAIIDGVEDKSRVGVCIDTCHAFAAGYDLRTSAECEKTFADFARIVGFKYLRGMHLNDAKSTFGSRVDRHHSLGEGNIGHDAFRWIMQDDRFDGIPLILETINPDIWAEEIAWLKAQQTEKAVA</sequence>
<accession>B1LKQ6</accession>
<reference key="1">
    <citation type="journal article" date="2008" name="J. Bacteriol.">
        <title>Insights into the environmental resistance gene pool from the genome sequence of the multidrug-resistant environmental isolate Escherichia coli SMS-3-5.</title>
        <authorList>
            <person name="Fricke W.F."/>
            <person name="Wright M.S."/>
            <person name="Lindell A.H."/>
            <person name="Harkins D.M."/>
            <person name="Baker-Austin C."/>
            <person name="Ravel J."/>
            <person name="Stepanauskas R."/>
        </authorList>
    </citation>
    <scope>NUCLEOTIDE SEQUENCE [LARGE SCALE GENOMIC DNA]</scope>
    <source>
        <strain>SMS-3-5 / SECEC</strain>
    </source>
</reference>
<proteinExistence type="inferred from homology"/>